<proteinExistence type="evidence at transcript level"/>
<accession>O01391</accession>
<organism>
    <name type="scientific">Aplysia californica</name>
    <name type="common">California sea hare</name>
    <dbReference type="NCBI Taxonomy" id="6500"/>
    <lineage>
        <taxon>Eukaryota</taxon>
        <taxon>Metazoa</taxon>
        <taxon>Spiralia</taxon>
        <taxon>Lophotrochozoa</taxon>
        <taxon>Mollusca</taxon>
        <taxon>Gastropoda</taxon>
        <taxon>Heterobranchia</taxon>
        <taxon>Euthyneura</taxon>
        <taxon>Tectipleura</taxon>
        <taxon>Aplysiida</taxon>
        <taxon>Aplysioidea</taxon>
        <taxon>Aplysiidae</taxon>
        <taxon>Aplysia</taxon>
    </lineage>
</organism>
<protein>
    <recommendedName>
        <fullName>Ubiquitin carboxyl-terminal hydrolase</fullName>
        <ecNumber>3.4.19.12</ecNumber>
    </recommendedName>
    <alternativeName>
        <fullName>Ubiquitin thioesterase</fullName>
    </alternativeName>
</protein>
<name>UCHL_APLCA</name>
<keyword id="KW-0963">Cytoplasm</keyword>
<keyword id="KW-0378">Hydrolase</keyword>
<keyword id="KW-0645">Protease</keyword>
<keyword id="KW-0788">Thiol protease</keyword>
<keyword id="KW-0833">Ubl conjugation pathway</keyword>
<feature type="chain" id="PRO_0000211068" description="Ubiquitin carboxyl-terminal hydrolase">
    <location>
        <begin position="1"/>
        <end position="214"/>
    </location>
</feature>
<feature type="domain" description="UCH catalytic" evidence="1">
    <location>
        <begin position="6"/>
        <end position="214"/>
    </location>
</feature>
<feature type="active site" description="Nucleophile" evidence="1 2">
    <location>
        <position position="90"/>
    </location>
</feature>
<feature type="active site" description="Proton donor" evidence="1">
    <location>
        <position position="164"/>
    </location>
</feature>
<feature type="site" description="Transition state stabilizer" evidence="1">
    <location>
        <position position="84"/>
    </location>
</feature>
<feature type="site" description="Important for enzyme activity" evidence="1">
    <location>
        <position position="179"/>
    </location>
</feature>
<dbReference type="EC" id="3.4.19.12"/>
<dbReference type="EMBL" id="U90177">
    <property type="protein sequence ID" value="AAB52410.1"/>
    <property type="molecule type" value="mRNA"/>
</dbReference>
<dbReference type="RefSeq" id="NP_001191493.1">
    <property type="nucleotide sequence ID" value="NM_001204564.1"/>
</dbReference>
<dbReference type="SMR" id="O01391"/>
<dbReference type="MEROPS" id="C12.003"/>
<dbReference type="EnsemblMetazoa" id="NM_001204564.1">
    <property type="protein sequence ID" value="NP_001191493.1"/>
    <property type="gene ID" value="GeneID_100533253"/>
</dbReference>
<dbReference type="GeneID" id="100533253"/>
<dbReference type="CTD" id="100533253"/>
<dbReference type="OrthoDB" id="427186at2759"/>
<dbReference type="Proteomes" id="UP000694888">
    <property type="component" value="Unplaced"/>
</dbReference>
<dbReference type="GO" id="GO:0005737">
    <property type="term" value="C:cytoplasm"/>
    <property type="evidence" value="ECO:0007669"/>
    <property type="project" value="UniProtKB-SubCell"/>
</dbReference>
<dbReference type="GO" id="GO:0004843">
    <property type="term" value="F:cysteine-type deubiquitinase activity"/>
    <property type="evidence" value="ECO:0007669"/>
    <property type="project" value="UniProtKB-EC"/>
</dbReference>
<dbReference type="GO" id="GO:0016579">
    <property type="term" value="P:protein deubiquitination"/>
    <property type="evidence" value="ECO:0007669"/>
    <property type="project" value="TreeGrafter"/>
</dbReference>
<dbReference type="GO" id="GO:0006511">
    <property type="term" value="P:ubiquitin-dependent protein catabolic process"/>
    <property type="evidence" value="ECO:0007669"/>
    <property type="project" value="InterPro"/>
</dbReference>
<dbReference type="CDD" id="cd09616">
    <property type="entry name" value="Peptidase_C12_UCH_L1_L3"/>
    <property type="match status" value="1"/>
</dbReference>
<dbReference type="FunFam" id="3.40.532.10:FF:000006">
    <property type="entry name" value="Ubiquitin carboxyl-terminal hydrolase"/>
    <property type="match status" value="1"/>
</dbReference>
<dbReference type="Gene3D" id="3.40.532.10">
    <property type="entry name" value="Peptidase C12, ubiquitin carboxyl-terminal hydrolase"/>
    <property type="match status" value="1"/>
</dbReference>
<dbReference type="InterPro" id="IPR038765">
    <property type="entry name" value="Papain-like_cys_pep_sf"/>
</dbReference>
<dbReference type="InterPro" id="IPR001578">
    <property type="entry name" value="Peptidase_C12_UCH"/>
</dbReference>
<dbReference type="InterPro" id="IPR036959">
    <property type="entry name" value="Peptidase_C12_UCH_sf"/>
</dbReference>
<dbReference type="InterPro" id="IPR057254">
    <property type="entry name" value="UCH_AS"/>
</dbReference>
<dbReference type="PANTHER" id="PTHR10589">
    <property type="entry name" value="UBIQUITIN CARBOXYL-TERMINAL HYDROLASE"/>
    <property type="match status" value="1"/>
</dbReference>
<dbReference type="PANTHER" id="PTHR10589:SF17">
    <property type="entry name" value="UBIQUITIN CARBOXYL-TERMINAL HYDROLASE"/>
    <property type="match status" value="1"/>
</dbReference>
<dbReference type="Pfam" id="PF01088">
    <property type="entry name" value="Peptidase_C12"/>
    <property type="match status" value="1"/>
</dbReference>
<dbReference type="PRINTS" id="PR00707">
    <property type="entry name" value="UBCTHYDRLASE"/>
</dbReference>
<dbReference type="SUPFAM" id="SSF54001">
    <property type="entry name" value="Cysteine proteinases"/>
    <property type="match status" value="1"/>
</dbReference>
<dbReference type="PROSITE" id="PS00140">
    <property type="entry name" value="UCH_1"/>
    <property type="match status" value="1"/>
</dbReference>
<dbReference type="PROSITE" id="PS52048">
    <property type="entry name" value="UCH_DOMAIN"/>
    <property type="match status" value="1"/>
</dbReference>
<sequence length="214" mass="23703">MASEQRWIPLESNPKVLNKYVHNLGMDAGWNFVDVFGLDPELLAMVPRPAAALVLLFPDDKETVNQLIGEYQSDYPDSLYYTKQTIGNACGTVAIVHALANNENVIPFDAAKHFKTFLEKTKPLNPEERAKHLEQDNLMGAAHGDCAQEGDTQAPSQDEHVKSHFVALVHCNGTLYELDGRKEAPVVHGTTSADTFLEDAAEVVKKFMARDPEI</sequence>
<evidence type="ECO:0000255" key="1">
    <source>
        <dbReference type="PROSITE-ProRule" id="PRU01393"/>
    </source>
</evidence>
<evidence type="ECO:0000255" key="2">
    <source>
        <dbReference type="PROSITE-ProRule" id="PRU10091"/>
    </source>
</evidence>
<evidence type="ECO:0000305" key="3"/>
<gene>
    <name type="primary">UCH</name>
</gene>
<reference key="1">
    <citation type="journal article" date="1997" name="Cell">
        <title>Ubiquitin C-terminal hydrolase is an immediate-early gene essential for long-term facilitation in Aplysia.</title>
        <authorList>
            <person name="Hegde A.N."/>
            <person name="Inokuchi K."/>
            <person name="Pei W."/>
            <person name="Casadio A."/>
            <person name="Ghirardi M."/>
            <person name="Chain D.G."/>
            <person name="Martin K.C."/>
            <person name="Kandel E.R."/>
            <person name="Schwartz J.H."/>
        </authorList>
    </citation>
    <scope>NUCLEOTIDE SEQUENCE [MRNA]</scope>
</reference>
<comment type="function">
    <text>Ubiquitin-protein hydrolase is involved both in the processing of ubiquitin precursors and of ubiquitinated proteins. This enzyme is a thiol protease that recognizes and hydrolyzes a peptide bond at the C-terminal glycine of ubiquitin.</text>
</comment>
<comment type="catalytic activity">
    <reaction>
        <text>Thiol-dependent hydrolysis of ester, thioester, amide, peptide and isopeptide bonds formed by the C-terminal Gly of ubiquitin (a 76-residue protein attached to proteins as an intracellular targeting signal).</text>
        <dbReference type="EC" id="3.4.19.12"/>
    </reaction>
</comment>
<comment type="subcellular location">
    <subcellularLocation>
        <location>Cytoplasm</location>
    </subcellularLocation>
</comment>
<comment type="similarity">
    <text evidence="3">Belongs to the peptidase C12 family.</text>
</comment>